<keyword id="KW-1185">Reference proteome</keyword>
<keyword id="KW-0687">Ribonucleoprotein</keyword>
<keyword id="KW-0689">Ribosomal protein</keyword>
<sequence>MSKLKITLKKSKIGRIEKHIRTCEALGLHKIGQSVIKEDNDAIRGMIRHIAFMVDVEEVK</sequence>
<proteinExistence type="inferred from homology"/>
<comment type="subunit">
    <text evidence="1">Part of the 50S ribosomal subunit.</text>
</comment>
<comment type="similarity">
    <text evidence="1">Belongs to the universal ribosomal protein uL30 family.</text>
</comment>
<evidence type="ECO:0000255" key="1">
    <source>
        <dbReference type="HAMAP-Rule" id="MF_01371"/>
    </source>
</evidence>
<evidence type="ECO:0000305" key="2"/>
<organism>
    <name type="scientific">Finegoldia magna (strain ATCC 29328 / DSM 20472 / WAL 2508)</name>
    <name type="common">Peptostreptococcus magnus</name>
    <dbReference type="NCBI Taxonomy" id="334413"/>
    <lineage>
        <taxon>Bacteria</taxon>
        <taxon>Bacillati</taxon>
        <taxon>Bacillota</taxon>
        <taxon>Tissierellia</taxon>
        <taxon>Tissierellales</taxon>
        <taxon>Peptoniphilaceae</taxon>
        <taxon>Finegoldia</taxon>
    </lineage>
</organism>
<gene>
    <name evidence="1" type="primary">rpmD</name>
    <name type="ordered locus">FMG_0173</name>
</gene>
<accession>B0RZS7</accession>
<name>RL30_FINM2</name>
<protein>
    <recommendedName>
        <fullName evidence="1">Large ribosomal subunit protein uL30</fullName>
    </recommendedName>
    <alternativeName>
        <fullName evidence="2">50S ribosomal protein L30</fullName>
    </alternativeName>
</protein>
<dbReference type="EMBL" id="AP008971">
    <property type="protein sequence ID" value="BAG07591.1"/>
    <property type="molecule type" value="Genomic_DNA"/>
</dbReference>
<dbReference type="RefSeq" id="WP_002836132.1">
    <property type="nucleotide sequence ID" value="NC_010376.1"/>
</dbReference>
<dbReference type="SMR" id="B0RZS7"/>
<dbReference type="STRING" id="334413.FMG_0173"/>
<dbReference type="GeneID" id="60839408"/>
<dbReference type="KEGG" id="fma:FMG_0173"/>
<dbReference type="eggNOG" id="COG1841">
    <property type="taxonomic scope" value="Bacteria"/>
</dbReference>
<dbReference type="HOGENOM" id="CLU_131047_2_1_9"/>
<dbReference type="Proteomes" id="UP000001319">
    <property type="component" value="Chromosome"/>
</dbReference>
<dbReference type="GO" id="GO:0015934">
    <property type="term" value="C:large ribosomal subunit"/>
    <property type="evidence" value="ECO:0007669"/>
    <property type="project" value="InterPro"/>
</dbReference>
<dbReference type="GO" id="GO:0003735">
    <property type="term" value="F:structural constituent of ribosome"/>
    <property type="evidence" value="ECO:0007669"/>
    <property type="project" value="InterPro"/>
</dbReference>
<dbReference type="GO" id="GO:0006412">
    <property type="term" value="P:translation"/>
    <property type="evidence" value="ECO:0007669"/>
    <property type="project" value="UniProtKB-UniRule"/>
</dbReference>
<dbReference type="CDD" id="cd01658">
    <property type="entry name" value="Ribosomal_L30"/>
    <property type="match status" value="1"/>
</dbReference>
<dbReference type="FunFam" id="3.30.1390.20:FF:000001">
    <property type="entry name" value="50S ribosomal protein L30"/>
    <property type="match status" value="1"/>
</dbReference>
<dbReference type="Gene3D" id="3.30.1390.20">
    <property type="entry name" value="Ribosomal protein L30, ferredoxin-like fold domain"/>
    <property type="match status" value="1"/>
</dbReference>
<dbReference type="HAMAP" id="MF_01371_B">
    <property type="entry name" value="Ribosomal_uL30_B"/>
    <property type="match status" value="1"/>
</dbReference>
<dbReference type="InterPro" id="IPR036919">
    <property type="entry name" value="Ribo_uL30_ferredoxin-like_sf"/>
</dbReference>
<dbReference type="InterPro" id="IPR005996">
    <property type="entry name" value="Ribosomal_uL30_bac-type"/>
</dbReference>
<dbReference type="InterPro" id="IPR016082">
    <property type="entry name" value="Ribosomal_uL30_ferredoxin-like"/>
</dbReference>
<dbReference type="NCBIfam" id="TIGR01308">
    <property type="entry name" value="rpmD_bact"/>
    <property type="match status" value="1"/>
</dbReference>
<dbReference type="Pfam" id="PF00327">
    <property type="entry name" value="Ribosomal_L30"/>
    <property type="match status" value="1"/>
</dbReference>
<dbReference type="PIRSF" id="PIRSF002211">
    <property type="entry name" value="Ribosomal_L30_bac-type"/>
    <property type="match status" value="1"/>
</dbReference>
<dbReference type="SUPFAM" id="SSF55129">
    <property type="entry name" value="Ribosomal protein L30p/L7e"/>
    <property type="match status" value="1"/>
</dbReference>
<feature type="chain" id="PRO_0000347099" description="Large ribosomal subunit protein uL30">
    <location>
        <begin position="1"/>
        <end position="60"/>
    </location>
</feature>
<reference key="1">
    <citation type="journal article" date="2008" name="DNA Res.">
        <title>Complete genome sequence of Finegoldia magna, an anaerobic opportunistic pathogen.</title>
        <authorList>
            <person name="Goto T."/>
            <person name="Yamashita A."/>
            <person name="Hirakawa H."/>
            <person name="Matsutani M."/>
            <person name="Todo K."/>
            <person name="Ohshima K."/>
            <person name="Toh H."/>
            <person name="Miyamoto K."/>
            <person name="Kuhara S."/>
            <person name="Hattori M."/>
            <person name="Shimizu T."/>
            <person name="Akimoto S."/>
        </authorList>
    </citation>
    <scope>NUCLEOTIDE SEQUENCE [LARGE SCALE GENOMIC DNA]</scope>
    <source>
        <strain>ATCC 29328 / DSM 20472 / WAL 2508</strain>
    </source>
</reference>